<dbReference type="EMBL" id="CH473948">
    <property type="protein sequence ID" value="EDM06879.1"/>
    <property type="molecule type" value="Genomic_DNA"/>
</dbReference>
<dbReference type="EMBL" id="BC167064">
    <property type="protein sequence ID" value="AAI67064.1"/>
    <property type="molecule type" value="mRNA"/>
</dbReference>
<dbReference type="RefSeq" id="NP_001121657.1">
    <property type="nucleotide sequence ID" value="NM_001128185.1"/>
</dbReference>
<dbReference type="SMR" id="B2RZ87"/>
<dbReference type="FunCoup" id="B2RZ87">
    <property type="interactions" value="3"/>
</dbReference>
<dbReference type="STRING" id="10116.ENSRNOP00000051831"/>
<dbReference type="PaxDb" id="10116-ENSRNOP00000051831"/>
<dbReference type="Ensembl" id="ENSRNOT00000054948.4">
    <property type="protein sequence ID" value="ENSRNOP00000051831.2"/>
    <property type="gene ID" value="ENSRNOG00000036681.4"/>
</dbReference>
<dbReference type="GeneID" id="303744"/>
<dbReference type="KEGG" id="rno:303744"/>
<dbReference type="AGR" id="RGD:1311499"/>
<dbReference type="CTD" id="255275"/>
<dbReference type="RGD" id="1311499">
    <property type="gene designation" value="Myadml2"/>
</dbReference>
<dbReference type="eggNOG" id="KOG4788">
    <property type="taxonomic scope" value="Eukaryota"/>
</dbReference>
<dbReference type="GeneTree" id="ENSGT00950000182933"/>
<dbReference type="HOGENOM" id="CLU_068368_0_0_1"/>
<dbReference type="InParanoid" id="B2RZ87"/>
<dbReference type="OMA" id="HLSWGNF"/>
<dbReference type="OrthoDB" id="8737882at2759"/>
<dbReference type="PhylomeDB" id="B2RZ87"/>
<dbReference type="PRO" id="PR:B2RZ87"/>
<dbReference type="Proteomes" id="UP000002494">
    <property type="component" value="Chromosome 10"/>
</dbReference>
<dbReference type="Proteomes" id="UP000234681">
    <property type="component" value="Chromosome 10"/>
</dbReference>
<dbReference type="Bgee" id="ENSRNOG00000036681">
    <property type="expression patterns" value="Expressed in quadriceps femoris and 7 other cell types or tissues"/>
</dbReference>
<dbReference type="GO" id="GO:0005737">
    <property type="term" value="C:cytoplasm"/>
    <property type="evidence" value="ECO:0000266"/>
    <property type="project" value="RGD"/>
</dbReference>
<dbReference type="GO" id="GO:0016020">
    <property type="term" value="C:membrane"/>
    <property type="evidence" value="ECO:0007669"/>
    <property type="project" value="UniProtKB-SubCell"/>
</dbReference>
<dbReference type="InterPro" id="IPR008253">
    <property type="entry name" value="Marvel"/>
</dbReference>
<dbReference type="InterPro" id="IPR047123">
    <property type="entry name" value="MYADM-like"/>
</dbReference>
<dbReference type="PANTHER" id="PTHR17068">
    <property type="entry name" value="MYELOID-ASSOCIATED DIFFERENTIATION MARKER MYADM FAMILY MEMBER"/>
    <property type="match status" value="1"/>
</dbReference>
<dbReference type="PANTHER" id="PTHR17068:SF5">
    <property type="entry name" value="MYELOID-ASSOCIATED DIFFERENTIATION MARKER-LIKE PROTEIN 2"/>
    <property type="match status" value="1"/>
</dbReference>
<dbReference type="Pfam" id="PF01284">
    <property type="entry name" value="MARVEL"/>
    <property type="match status" value="2"/>
</dbReference>
<dbReference type="PROSITE" id="PS51225">
    <property type="entry name" value="MARVEL"/>
    <property type="match status" value="2"/>
</dbReference>
<gene>
    <name type="primary">Myadml2</name>
</gene>
<organism>
    <name type="scientific">Rattus norvegicus</name>
    <name type="common">Rat</name>
    <dbReference type="NCBI Taxonomy" id="10116"/>
    <lineage>
        <taxon>Eukaryota</taxon>
        <taxon>Metazoa</taxon>
        <taxon>Chordata</taxon>
        <taxon>Craniata</taxon>
        <taxon>Vertebrata</taxon>
        <taxon>Euteleostomi</taxon>
        <taxon>Mammalia</taxon>
        <taxon>Eutheria</taxon>
        <taxon>Euarchontoglires</taxon>
        <taxon>Glires</taxon>
        <taxon>Rodentia</taxon>
        <taxon>Myomorpha</taxon>
        <taxon>Muroidea</taxon>
        <taxon>Muridae</taxon>
        <taxon>Murinae</taxon>
        <taxon>Rattus</taxon>
    </lineage>
</organism>
<sequence>MGSTMEPPGGAYLHLGAVTSPVGTARMLQLAFGCTTFSLVAHRGGFGGVQGTFCMAAWGFCFAFSVLVVACEFTRLHSCLRLSWGNFTAAFAMLATLLCATAAVIYPLYFTRLECPPEPAGCMVRNFRLAASVFAGLLFLAYAAEVALTRARPGQVASYMATVSGLLKIVQAFVACIIFGALVHESRYGRYVATQWCVAVYSLCFMATVAVVVLSVMGHTGGLGCPFDRLVVVYTFLAVLLYLSAAVIWPVFCFDPKYGEPGRPSDCPRGSCPWDSQLVVAIFTYVNLLLYIVDLAYSQRIRFVPTL</sequence>
<feature type="chain" id="PRO_0000357328" description="Myeloid-associated differentiation marker-like protein 2">
    <location>
        <begin position="1"/>
        <end position="307"/>
    </location>
</feature>
<feature type="transmembrane region" description="Helical" evidence="1">
    <location>
        <begin position="53"/>
        <end position="73"/>
    </location>
</feature>
<feature type="transmembrane region" description="Helical" evidence="1">
    <location>
        <begin position="90"/>
        <end position="110"/>
    </location>
</feature>
<feature type="transmembrane region" description="Helical" evidence="1">
    <location>
        <begin position="129"/>
        <end position="149"/>
    </location>
</feature>
<feature type="transmembrane region" description="Helical" evidence="1">
    <location>
        <begin position="163"/>
        <end position="183"/>
    </location>
</feature>
<feature type="transmembrane region" description="Helical" evidence="1">
    <location>
        <begin position="198"/>
        <end position="218"/>
    </location>
</feature>
<feature type="transmembrane region" description="Helical" evidence="1">
    <location>
        <begin position="232"/>
        <end position="252"/>
    </location>
</feature>
<feature type="transmembrane region" description="Helical" evidence="1">
    <location>
        <begin position="278"/>
        <end position="298"/>
    </location>
</feature>
<feature type="domain" description="MARVEL 1" evidence="2">
    <location>
        <begin position="17"/>
        <end position="154"/>
    </location>
</feature>
<feature type="domain" description="MARVEL 2" evidence="2">
    <location>
        <begin position="159"/>
        <end position="303"/>
    </location>
</feature>
<name>MADL2_RAT</name>
<accession>B2RZ87</accession>
<proteinExistence type="evidence at transcript level"/>
<reference key="1">
    <citation type="submission" date="2005-07" db="EMBL/GenBank/DDBJ databases">
        <authorList>
            <person name="Mural R.J."/>
            <person name="Adams M.D."/>
            <person name="Myers E.W."/>
            <person name="Smith H.O."/>
            <person name="Venter J.C."/>
        </authorList>
    </citation>
    <scope>NUCLEOTIDE SEQUENCE [LARGE SCALE GENOMIC DNA]</scope>
</reference>
<reference key="2">
    <citation type="journal article" date="2004" name="Genome Res.">
        <title>The status, quality, and expansion of the NIH full-length cDNA project: the Mammalian Gene Collection (MGC).</title>
        <authorList>
            <consortium name="The MGC Project Team"/>
        </authorList>
    </citation>
    <scope>NUCLEOTIDE SEQUENCE [LARGE SCALE MRNA]</scope>
    <source>
        <tissue>Heart</tissue>
    </source>
</reference>
<comment type="subcellular location">
    <subcellularLocation>
        <location evidence="3">Membrane</location>
        <topology evidence="3">Multi-pass membrane protein</topology>
    </subcellularLocation>
</comment>
<comment type="similarity">
    <text evidence="3">Belongs to the MAL family.</text>
</comment>
<keyword id="KW-0472">Membrane</keyword>
<keyword id="KW-1185">Reference proteome</keyword>
<keyword id="KW-0677">Repeat</keyword>
<keyword id="KW-0812">Transmembrane</keyword>
<keyword id="KW-1133">Transmembrane helix</keyword>
<evidence type="ECO:0000255" key="1"/>
<evidence type="ECO:0000255" key="2">
    <source>
        <dbReference type="PROSITE-ProRule" id="PRU00581"/>
    </source>
</evidence>
<evidence type="ECO:0000305" key="3"/>
<protein>
    <recommendedName>
        <fullName>Myeloid-associated differentiation marker-like protein 2</fullName>
    </recommendedName>
</protein>